<accession>B1L6L3</accession>
<dbReference type="EMBL" id="CP000968">
    <property type="protein sequence ID" value="ACB08092.1"/>
    <property type="molecule type" value="Genomic_DNA"/>
</dbReference>
<dbReference type="RefSeq" id="WP_012309989.1">
    <property type="nucleotide sequence ID" value="NC_010482.1"/>
</dbReference>
<dbReference type="SMR" id="B1L6L3"/>
<dbReference type="FunCoup" id="B1L6L3">
    <property type="interactions" value="139"/>
</dbReference>
<dbReference type="STRING" id="374847.Kcr_1346"/>
<dbReference type="EnsemblBacteria" id="ACB08092">
    <property type="protein sequence ID" value="ACB08092"/>
    <property type="gene ID" value="Kcr_1346"/>
</dbReference>
<dbReference type="GeneID" id="6094623"/>
<dbReference type="KEGG" id="kcr:Kcr_1346"/>
<dbReference type="eggNOG" id="arCOG04289">
    <property type="taxonomic scope" value="Archaea"/>
</dbReference>
<dbReference type="HOGENOM" id="CLU_062853_4_0_2"/>
<dbReference type="InParanoid" id="B1L6L3"/>
<dbReference type="PhylomeDB" id="B1L6L3"/>
<dbReference type="Proteomes" id="UP000001686">
    <property type="component" value="Chromosome"/>
</dbReference>
<dbReference type="GO" id="GO:0015934">
    <property type="term" value="C:large ribosomal subunit"/>
    <property type="evidence" value="ECO:0007669"/>
    <property type="project" value="InterPro"/>
</dbReference>
<dbReference type="GO" id="GO:0019843">
    <property type="term" value="F:rRNA binding"/>
    <property type="evidence" value="ECO:0007669"/>
    <property type="project" value="UniProtKB-UniRule"/>
</dbReference>
<dbReference type="GO" id="GO:0003735">
    <property type="term" value="F:structural constituent of ribosome"/>
    <property type="evidence" value="ECO:0007669"/>
    <property type="project" value="InterPro"/>
</dbReference>
<dbReference type="GO" id="GO:0000049">
    <property type="term" value="F:tRNA binding"/>
    <property type="evidence" value="ECO:0007669"/>
    <property type="project" value="UniProtKB-KW"/>
</dbReference>
<dbReference type="GO" id="GO:0006417">
    <property type="term" value="P:regulation of translation"/>
    <property type="evidence" value="ECO:0007669"/>
    <property type="project" value="UniProtKB-KW"/>
</dbReference>
<dbReference type="GO" id="GO:0006412">
    <property type="term" value="P:translation"/>
    <property type="evidence" value="ECO:0007669"/>
    <property type="project" value="UniProtKB-UniRule"/>
</dbReference>
<dbReference type="CDD" id="cd00403">
    <property type="entry name" value="Ribosomal_L1"/>
    <property type="match status" value="1"/>
</dbReference>
<dbReference type="FunFam" id="3.40.50.790:FF:000005">
    <property type="entry name" value="50S ribosomal protein L1"/>
    <property type="match status" value="1"/>
</dbReference>
<dbReference type="Gene3D" id="3.30.190.20">
    <property type="match status" value="1"/>
</dbReference>
<dbReference type="Gene3D" id="3.40.50.790">
    <property type="match status" value="1"/>
</dbReference>
<dbReference type="HAMAP" id="MF_01318_A">
    <property type="entry name" value="Ribosomal_uL1_A"/>
    <property type="match status" value="1"/>
</dbReference>
<dbReference type="InterPro" id="IPR002143">
    <property type="entry name" value="Ribosomal_uL1"/>
</dbReference>
<dbReference type="InterPro" id="IPR023674">
    <property type="entry name" value="Ribosomal_uL1-like"/>
</dbReference>
<dbReference type="InterPro" id="IPR028364">
    <property type="entry name" value="Ribosomal_uL1/biogenesis"/>
</dbReference>
<dbReference type="InterPro" id="IPR016095">
    <property type="entry name" value="Ribosomal_uL1_3-a/b-sand"/>
</dbReference>
<dbReference type="InterPro" id="IPR023669">
    <property type="entry name" value="Ribosomal_uL1_arc"/>
</dbReference>
<dbReference type="NCBIfam" id="NF003244">
    <property type="entry name" value="PRK04203.1"/>
    <property type="match status" value="1"/>
</dbReference>
<dbReference type="PANTHER" id="PTHR36427">
    <property type="entry name" value="54S RIBOSOMAL PROTEIN L1, MITOCHONDRIAL"/>
    <property type="match status" value="1"/>
</dbReference>
<dbReference type="PANTHER" id="PTHR36427:SF3">
    <property type="entry name" value="LARGE RIBOSOMAL SUBUNIT PROTEIN UL1M"/>
    <property type="match status" value="1"/>
</dbReference>
<dbReference type="Pfam" id="PF00687">
    <property type="entry name" value="Ribosomal_L1"/>
    <property type="match status" value="1"/>
</dbReference>
<dbReference type="PIRSF" id="PIRSF002155">
    <property type="entry name" value="Ribosomal_L1"/>
    <property type="match status" value="1"/>
</dbReference>
<dbReference type="SUPFAM" id="SSF56808">
    <property type="entry name" value="Ribosomal protein L1"/>
    <property type="match status" value="1"/>
</dbReference>
<reference key="1">
    <citation type="journal article" date="2008" name="Proc. Natl. Acad. Sci. U.S.A.">
        <title>A korarchaeal genome reveals new insights into the evolution of the Archaea.</title>
        <authorList>
            <person name="Elkins J.G."/>
            <person name="Podar M."/>
            <person name="Graham D.E."/>
            <person name="Makarova K.S."/>
            <person name="Wolf Y."/>
            <person name="Randau L."/>
            <person name="Hedlund B.P."/>
            <person name="Brochier-Armanet C."/>
            <person name="Kunin V."/>
            <person name="Anderson I."/>
            <person name="Lapidus A."/>
            <person name="Goltsman E."/>
            <person name="Barry K."/>
            <person name="Koonin E.V."/>
            <person name="Hugenholtz P."/>
            <person name="Kyrpides N."/>
            <person name="Wanner G."/>
            <person name="Richardson P."/>
            <person name="Keller M."/>
            <person name="Stetter K.O."/>
        </authorList>
    </citation>
    <scope>NUCLEOTIDE SEQUENCE [LARGE SCALE GENOMIC DNA]</scope>
    <source>
        <strain>OPF8</strain>
    </source>
</reference>
<sequence length="226" mass="25384">MSKLLTESDSLKVIRRILEGSPKRRFNEAVDLVVVLRGIDLKRDPNAKINEVVELPHSPRNRKTKVAVIGKGEFLSKAKEAGADRVLEPEEIEAIAANKRALKKLANEYDFFIAQADVLPKIVKYIGPVLGPRNKMPINLPAMAVSQLPDLIEKLRRSVRIRTKDQPIIHTKVGSRDMKPEEIVENIRAVLSAIERKYEDPSKISRVYVKTTMGPAEELPLAAGRR</sequence>
<proteinExistence type="inferred from homology"/>
<keyword id="KW-1185">Reference proteome</keyword>
<keyword id="KW-0678">Repressor</keyword>
<keyword id="KW-0687">Ribonucleoprotein</keyword>
<keyword id="KW-0689">Ribosomal protein</keyword>
<keyword id="KW-0694">RNA-binding</keyword>
<keyword id="KW-0699">rRNA-binding</keyword>
<keyword id="KW-0810">Translation regulation</keyword>
<keyword id="KW-0820">tRNA-binding</keyword>
<protein>
    <recommendedName>
        <fullName evidence="1">Large ribosomal subunit protein uL1</fullName>
    </recommendedName>
    <alternativeName>
        <fullName evidence="2">50S ribosomal protein L1</fullName>
    </alternativeName>
</protein>
<gene>
    <name evidence="1" type="primary">rpl1</name>
    <name type="ordered locus">Kcr_1346</name>
</gene>
<feature type="chain" id="PRO_1000141417" description="Large ribosomal subunit protein uL1">
    <location>
        <begin position="1"/>
        <end position="226"/>
    </location>
</feature>
<organism>
    <name type="scientific">Korarchaeum cryptofilum (strain OPF8)</name>
    <dbReference type="NCBI Taxonomy" id="374847"/>
    <lineage>
        <taxon>Archaea</taxon>
        <taxon>Thermoproteota</taxon>
        <taxon>Candidatus Korarchaeia</taxon>
        <taxon>Candidatus Korarchaeales</taxon>
        <taxon>Candidatus Korarchaeaceae</taxon>
        <taxon>Candidatus Korarchaeum</taxon>
    </lineage>
</organism>
<evidence type="ECO:0000255" key="1">
    <source>
        <dbReference type="HAMAP-Rule" id="MF_01318"/>
    </source>
</evidence>
<evidence type="ECO:0000305" key="2"/>
<comment type="function">
    <text evidence="1">Binds directly to 23S rRNA. Probably involved in E site tRNA release.</text>
</comment>
<comment type="function">
    <text evidence="1">Protein L1 is also a translational repressor protein, it controls the translation of its operon by binding to its mRNA.</text>
</comment>
<comment type="subunit">
    <text evidence="1">Part of the 50S ribosomal subunit.</text>
</comment>
<comment type="similarity">
    <text evidence="1">Belongs to the universal ribosomal protein uL1 family.</text>
</comment>
<name>RL1_KORCO</name>